<name>PER2_ARATH</name>
<keyword id="KW-0106">Calcium</keyword>
<keyword id="KW-1015">Disulfide bond</keyword>
<keyword id="KW-0325">Glycoprotein</keyword>
<keyword id="KW-0349">Heme</keyword>
<keyword id="KW-0376">Hydrogen peroxide</keyword>
<keyword id="KW-0408">Iron</keyword>
<keyword id="KW-0479">Metal-binding</keyword>
<keyword id="KW-0560">Oxidoreductase</keyword>
<keyword id="KW-0575">Peroxidase</keyword>
<keyword id="KW-1185">Reference proteome</keyword>
<keyword id="KW-0964">Secreted</keyword>
<keyword id="KW-0732">Signal</keyword>
<protein>
    <recommendedName>
        <fullName>Peroxidase 2</fullName>
        <ecNumber>1.11.1.7</ecNumber>
    </recommendedName>
    <alternativeName>
        <fullName>ATP12a</fullName>
    </alternativeName>
    <alternativeName>
        <fullName>Atperox P2</fullName>
    </alternativeName>
</protein>
<organism>
    <name type="scientific">Arabidopsis thaliana</name>
    <name type="common">Mouse-ear cress</name>
    <dbReference type="NCBI Taxonomy" id="3702"/>
    <lineage>
        <taxon>Eukaryota</taxon>
        <taxon>Viridiplantae</taxon>
        <taxon>Streptophyta</taxon>
        <taxon>Embryophyta</taxon>
        <taxon>Tracheophyta</taxon>
        <taxon>Spermatophyta</taxon>
        <taxon>Magnoliopsida</taxon>
        <taxon>eudicotyledons</taxon>
        <taxon>Gunneridae</taxon>
        <taxon>Pentapetalae</taxon>
        <taxon>rosids</taxon>
        <taxon>malvids</taxon>
        <taxon>Brassicales</taxon>
        <taxon>Brassicaceae</taxon>
        <taxon>Camelineae</taxon>
        <taxon>Arabidopsis</taxon>
    </lineage>
</organism>
<accession>Q67Z07</accession>
<accession>Q96506</accession>
<gene>
    <name type="primary">PER2</name>
    <name type="synonym">P2</name>
    <name type="ordered locus">At1g05250</name>
    <name type="ORF">YUP8H12.14</name>
</gene>
<feature type="signal peptide" evidence="1">
    <location>
        <begin position="1"/>
        <end position="21"/>
    </location>
</feature>
<feature type="chain" id="PRO_0000416583" description="Peroxidase 2">
    <location>
        <begin position="22"/>
        <end position="325"/>
    </location>
</feature>
<feature type="active site" description="Proton acceptor" evidence="2 3">
    <location>
        <position position="66"/>
    </location>
</feature>
<feature type="binding site" evidence="2">
    <location>
        <position position="67"/>
    </location>
    <ligand>
        <name>Ca(2+)</name>
        <dbReference type="ChEBI" id="CHEBI:29108"/>
        <label>1</label>
    </ligand>
</feature>
<feature type="binding site" evidence="2">
    <location>
        <position position="70"/>
    </location>
    <ligand>
        <name>Ca(2+)</name>
        <dbReference type="ChEBI" id="CHEBI:29108"/>
        <label>1</label>
    </ligand>
</feature>
<feature type="binding site" evidence="2">
    <location>
        <position position="72"/>
    </location>
    <ligand>
        <name>Ca(2+)</name>
        <dbReference type="ChEBI" id="CHEBI:29108"/>
        <label>1</label>
    </ligand>
</feature>
<feature type="binding site" evidence="2">
    <location>
        <position position="74"/>
    </location>
    <ligand>
        <name>Ca(2+)</name>
        <dbReference type="ChEBI" id="CHEBI:29108"/>
        <label>1</label>
    </ligand>
</feature>
<feature type="binding site" evidence="2">
    <location>
        <position position="76"/>
    </location>
    <ligand>
        <name>Ca(2+)</name>
        <dbReference type="ChEBI" id="CHEBI:29108"/>
        <label>1</label>
    </ligand>
</feature>
<feature type="binding site" evidence="2">
    <location>
        <position position="161"/>
    </location>
    <ligand>
        <name>substrate</name>
    </ligand>
</feature>
<feature type="binding site" description="axial binding residue" evidence="2">
    <location>
        <position position="191"/>
    </location>
    <ligand>
        <name>heme b</name>
        <dbReference type="ChEBI" id="CHEBI:60344"/>
    </ligand>
    <ligandPart>
        <name>Fe</name>
        <dbReference type="ChEBI" id="CHEBI:18248"/>
    </ligandPart>
</feature>
<feature type="binding site" evidence="2">
    <location>
        <position position="192"/>
    </location>
    <ligand>
        <name>Ca(2+)</name>
        <dbReference type="ChEBI" id="CHEBI:29108"/>
        <label>2</label>
    </ligand>
</feature>
<feature type="binding site" evidence="2">
    <location>
        <position position="242"/>
    </location>
    <ligand>
        <name>Ca(2+)</name>
        <dbReference type="ChEBI" id="CHEBI:29108"/>
        <label>2</label>
    </ligand>
</feature>
<feature type="binding site" evidence="2">
    <location>
        <position position="245"/>
    </location>
    <ligand>
        <name>Ca(2+)</name>
        <dbReference type="ChEBI" id="CHEBI:29108"/>
        <label>2</label>
    </ligand>
</feature>
<feature type="binding site" evidence="2">
    <location>
        <position position="250"/>
    </location>
    <ligand>
        <name>Ca(2+)</name>
        <dbReference type="ChEBI" id="CHEBI:29108"/>
        <label>2</label>
    </ligand>
</feature>
<feature type="site" description="Transition state stabilizer" evidence="2">
    <location>
        <position position="62"/>
    </location>
</feature>
<feature type="glycosylation site" description="N-linked (GlcNAc...) asparagine" evidence="1">
    <location>
        <position position="207"/>
    </location>
</feature>
<feature type="disulfide bond" evidence="2">
    <location>
        <begin position="35"/>
        <end position="113"/>
    </location>
</feature>
<feature type="disulfide bond" evidence="2">
    <location>
        <begin position="68"/>
        <end position="73"/>
    </location>
</feature>
<feature type="disulfide bond" evidence="2">
    <location>
        <begin position="119"/>
        <end position="321"/>
    </location>
</feature>
<feature type="disulfide bond" evidence="2">
    <location>
        <begin position="198"/>
        <end position="230"/>
    </location>
</feature>
<evidence type="ECO:0000255" key="1"/>
<evidence type="ECO:0000255" key="2">
    <source>
        <dbReference type="PROSITE-ProRule" id="PRU00297"/>
    </source>
</evidence>
<evidence type="ECO:0000255" key="3">
    <source>
        <dbReference type="PROSITE-ProRule" id="PRU10012"/>
    </source>
</evidence>
<sequence length="325" mass="35624">MAIKNILALVVLLSVVGVSVAIPQLLDLDYYRSKCPKAEEIVRGVTVQYVSRQKTLAAKLLRMHFHDCFVRGCDGSVLLKSAKNDAERDAVPNLTLKGYEVVDAAKTALERKCPNLISCADVLALVARDAVAVIGGPWWPVPLGRRDGRISKLNDALLNLPSPFADIKTLKKNFANKGLNAKDLVVLSGGHTIGISSCALVNSRLYNFTGKGDSDPSMNPSYVRELKRKCPPTDFRTSLNMDPGSALTFDTHYFKVVAQKKGLFTSDSTLLDDIETKNYVQTQAILPPVFSSFNKDFSDSMVKLGFVQILTGKNGEIRKRCAFPN</sequence>
<reference key="1">
    <citation type="journal article" date="2000" name="Nature">
        <title>Sequence and analysis of chromosome 1 of the plant Arabidopsis thaliana.</title>
        <authorList>
            <person name="Theologis A."/>
            <person name="Ecker J.R."/>
            <person name="Palm C.J."/>
            <person name="Federspiel N.A."/>
            <person name="Kaul S."/>
            <person name="White O."/>
            <person name="Alonso J."/>
            <person name="Altafi H."/>
            <person name="Araujo R."/>
            <person name="Bowman C.L."/>
            <person name="Brooks S.Y."/>
            <person name="Buehler E."/>
            <person name="Chan A."/>
            <person name="Chao Q."/>
            <person name="Chen H."/>
            <person name="Cheuk R.F."/>
            <person name="Chin C.W."/>
            <person name="Chung M.K."/>
            <person name="Conn L."/>
            <person name="Conway A.B."/>
            <person name="Conway A.R."/>
            <person name="Creasy T.H."/>
            <person name="Dewar K."/>
            <person name="Dunn P."/>
            <person name="Etgu P."/>
            <person name="Feldblyum T.V."/>
            <person name="Feng J.-D."/>
            <person name="Fong B."/>
            <person name="Fujii C.Y."/>
            <person name="Gill J.E."/>
            <person name="Goldsmith A.D."/>
            <person name="Haas B."/>
            <person name="Hansen N.F."/>
            <person name="Hughes B."/>
            <person name="Huizar L."/>
            <person name="Hunter J.L."/>
            <person name="Jenkins J."/>
            <person name="Johnson-Hopson C."/>
            <person name="Khan S."/>
            <person name="Khaykin E."/>
            <person name="Kim C.J."/>
            <person name="Koo H.L."/>
            <person name="Kremenetskaia I."/>
            <person name="Kurtz D.B."/>
            <person name="Kwan A."/>
            <person name="Lam B."/>
            <person name="Langin-Hooper S."/>
            <person name="Lee A."/>
            <person name="Lee J.M."/>
            <person name="Lenz C.A."/>
            <person name="Li J.H."/>
            <person name="Li Y.-P."/>
            <person name="Lin X."/>
            <person name="Liu S.X."/>
            <person name="Liu Z.A."/>
            <person name="Luros J.S."/>
            <person name="Maiti R."/>
            <person name="Marziali A."/>
            <person name="Militscher J."/>
            <person name="Miranda M."/>
            <person name="Nguyen M."/>
            <person name="Nierman W.C."/>
            <person name="Osborne B.I."/>
            <person name="Pai G."/>
            <person name="Peterson J."/>
            <person name="Pham P.K."/>
            <person name="Rizzo M."/>
            <person name="Rooney T."/>
            <person name="Rowley D."/>
            <person name="Sakano H."/>
            <person name="Salzberg S.L."/>
            <person name="Schwartz J.R."/>
            <person name="Shinn P."/>
            <person name="Southwick A.M."/>
            <person name="Sun H."/>
            <person name="Tallon L.J."/>
            <person name="Tambunga G."/>
            <person name="Toriumi M.J."/>
            <person name="Town C.D."/>
            <person name="Utterback T."/>
            <person name="Van Aken S."/>
            <person name="Vaysberg M."/>
            <person name="Vysotskaia V.S."/>
            <person name="Walker M."/>
            <person name="Wu D."/>
            <person name="Yu G."/>
            <person name="Fraser C.M."/>
            <person name="Venter J.C."/>
            <person name="Davis R.W."/>
        </authorList>
    </citation>
    <scope>NUCLEOTIDE SEQUENCE [LARGE SCALE GENOMIC DNA]</scope>
    <source>
        <strain>cv. Columbia</strain>
    </source>
</reference>
<reference key="2">
    <citation type="journal article" date="2017" name="Plant J.">
        <title>Araport11: a complete reannotation of the Arabidopsis thaliana reference genome.</title>
        <authorList>
            <person name="Cheng C.Y."/>
            <person name="Krishnakumar V."/>
            <person name="Chan A.P."/>
            <person name="Thibaud-Nissen F."/>
            <person name="Schobel S."/>
            <person name="Town C.D."/>
        </authorList>
    </citation>
    <scope>GENOME REANNOTATION</scope>
    <source>
        <strain>cv. Columbia</strain>
    </source>
</reference>
<reference key="3">
    <citation type="submission" date="2004-09" db="EMBL/GenBank/DDBJ databases">
        <title>Large-scale analysis of RIKEN Arabidopsis full-length (RAFL) cDNAs.</title>
        <authorList>
            <person name="Totoki Y."/>
            <person name="Seki M."/>
            <person name="Ishida J."/>
            <person name="Nakajima M."/>
            <person name="Enju A."/>
            <person name="Kamiya A."/>
            <person name="Narusaka M."/>
            <person name="Shin-i T."/>
            <person name="Nakagawa M."/>
            <person name="Sakamoto N."/>
            <person name="Oishi K."/>
            <person name="Kohara Y."/>
            <person name="Kobayashi M."/>
            <person name="Toyoda A."/>
            <person name="Sakaki Y."/>
            <person name="Sakurai T."/>
            <person name="Iida K."/>
            <person name="Akiyama K."/>
            <person name="Satou M."/>
            <person name="Toyoda T."/>
            <person name="Konagaya A."/>
            <person name="Carninci P."/>
            <person name="Kawai J."/>
            <person name="Hayashizaki Y."/>
            <person name="Shinozaki K."/>
        </authorList>
    </citation>
    <scope>NUCLEOTIDE SEQUENCE [LARGE SCALE MRNA]</scope>
    <source>
        <strain>cv. Columbia</strain>
    </source>
</reference>
<reference key="4">
    <citation type="journal article" date="2002" name="Gene">
        <title>Analysis and expression of the class III peroxidase large gene family in Arabidopsis thaliana.</title>
        <authorList>
            <person name="Tognolli M."/>
            <person name="Penel C."/>
            <person name="Greppin H."/>
            <person name="Simon P."/>
        </authorList>
    </citation>
    <scope>GENE FAMILY ORGANIZATION</scope>
    <scope>NOMENCLATURE</scope>
    <source>
        <strain>cv. Columbia</strain>
    </source>
</reference>
<dbReference type="EC" id="1.11.1.7"/>
<dbReference type="EMBL" id="AC000098">
    <property type="protein sequence ID" value="AAB71453.1"/>
    <property type="molecule type" value="Genomic_DNA"/>
</dbReference>
<dbReference type="EMBL" id="CP002684">
    <property type="protein sequence ID" value="AEE27814.1"/>
    <property type="molecule type" value="Genomic_DNA"/>
</dbReference>
<dbReference type="EMBL" id="AK176226">
    <property type="protein sequence ID" value="BAD43989.1"/>
    <property type="molecule type" value="mRNA"/>
</dbReference>
<dbReference type="EMBL" id="AK176311">
    <property type="protein sequence ID" value="BAD44074.1"/>
    <property type="molecule type" value="mRNA"/>
</dbReference>
<dbReference type="PIR" id="A86187">
    <property type="entry name" value="A86187"/>
</dbReference>
<dbReference type="RefSeq" id="NP_563732.1">
    <property type="nucleotide sequence ID" value="NM_100403.4"/>
</dbReference>
<dbReference type="RefSeq" id="NP_563733.1">
    <property type="nucleotide sequence ID" value="NM_100404.4"/>
</dbReference>
<dbReference type="SMR" id="Q67Z07"/>
<dbReference type="FunCoup" id="Q67Z07">
    <property type="interactions" value="128"/>
</dbReference>
<dbReference type="STRING" id="3702.Q67Z07"/>
<dbReference type="PeroxiBase" id="78">
    <property type="entry name" value="AtPrx02"/>
</dbReference>
<dbReference type="GlyCosmos" id="Q67Z07">
    <property type="glycosylation" value="1 site, No reported glycans"/>
</dbReference>
<dbReference type="GlyGen" id="Q67Z07">
    <property type="glycosylation" value="1 site"/>
</dbReference>
<dbReference type="EnsemblPlants" id="AT1G05240.1">
    <property type="protein sequence ID" value="AT1G05240.1"/>
    <property type="gene ID" value="AT1G05240"/>
</dbReference>
<dbReference type="EnsemblPlants" id="AT1G05250.1">
    <property type="protein sequence ID" value="AT1G05250.1"/>
    <property type="gene ID" value="AT1G05250"/>
</dbReference>
<dbReference type="GeneID" id="838206"/>
<dbReference type="Gramene" id="AT1G05240.1">
    <property type="protein sequence ID" value="AT1G05240.1"/>
    <property type="gene ID" value="AT1G05240"/>
</dbReference>
<dbReference type="Gramene" id="AT1G05250.1">
    <property type="protein sequence ID" value="AT1G05250.1"/>
    <property type="gene ID" value="AT1G05250"/>
</dbReference>
<dbReference type="KEGG" id="ath:AT1G05240"/>
<dbReference type="KEGG" id="ath:AT1G05250"/>
<dbReference type="Araport" id="AT1G05250"/>
<dbReference type="TAIR" id="AT1G05250">
    <property type="gene designation" value="PRX2"/>
</dbReference>
<dbReference type="HOGENOM" id="CLU_010543_0_3_1"/>
<dbReference type="InParanoid" id="Q67Z07"/>
<dbReference type="OMA" id="CGLINNR"/>
<dbReference type="PhylomeDB" id="Q67Z07"/>
<dbReference type="PRO" id="PR:Q67Z07"/>
<dbReference type="Proteomes" id="UP000006548">
    <property type="component" value="Chromosome 1"/>
</dbReference>
<dbReference type="ExpressionAtlas" id="Q67Z07">
    <property type="expression patterns" value="baseline and differential"/>
</dbReference>
<dbReference type="GO" id="GO:0005576">
    <property type="term" value="C:extracellular region"/>
    <property type="evidence" value="ECO:0007669"/>
    <property type="project" value="UniProtKB-SubCell"/>
</dbReference>
<dbReference type="GO" id="GO:0020037">
    <property type="term" value="F:heme binding"/>
    <property type="evidence" value="ECO:0007669"/>
    <property type="project" value="InterPro"/>
</dbReference>
<dbReference type="GO" id="GO:0140825">
    <property type="term" value="F:lactoperoxidase activity"/>
    <property type="evidence" value="ECO:0007669"/>
    <property type="project" value="UniProtKB-EC"/>
</dbReference>
<dbReference type="GO" id="GO:0046872">
    <property type="term" value="F:metal ion binding"/>
    <property type="evidence" value="ECO:0007669"/>
    <property type="project" value="UniProtKB-KW"/>
</dbReference>
<dbReference type="GO" id="GO:0004601">
    <property type="term" value="F:peroxidase activity"/>
    <property type="evidence" value="ECO:0000314"/>
    <property type="project" value="TAIR"/>
</dbReference>
<dbReference type="GO" id="GO:0042744">
    <property type="term" value="P:hydrogen peroxide catabolic process"/>
    <property type="evidence" value="ECO:0007669"/>
    <property type="project" value="UniProtKB-KW"/>
</dbReference>
<dbReference type="GO" id="GO:0009808">
    <property type="term" value="P:lignin metabolic process"/>
    <property type="evidence" value="ECO:0000315"/>
    <property type="project" value="TAIR"/>
</dbReference>
<dbReference type="GO" id="GO:0009664">
    <property type="term" value="P:plant-type cell wall organization"/>
    <property type="evidence" value="ECO:0000315"/>
    <property type="project" value="TAIR"/>
</dbReference>
<dbReference type="GO" id="GO:0006979">
    <property type="term" value="P:response to oxidative stress"/>
    <property type="evidence" value="ECO:0007669"/>
    <property type="project" value="InterPro"/>
</dbReference>
<dbReference type="CDD" id="cd00693">
    <property type="entry name" value="secretory_peroxidase"/>
    <property type="match status" value="1"/>
</dbReference>
<dbReference type="FunFam" id="1.10.420.10:FF:000008">
    <property type="entry name" value="Peroxidase"/>
    <property type="match status" value="1"/>
</dbReference>
<dbReference type="FunFam" id="1.10.520.10:FF:000001">
    <property type="entry name" value="Peroxidase"/>
    <property type="match status" value="1"/>
</dbReference>
<dbReference type="Gene3D" id="1.10.520.10">
    <property type="match status" value="1"/>
</dbReference>
<dbReference type="Gene3D" id="1.10.420.10">
    <property type="entry name" value="Peroxidase, domain 2"/>
    <property type="match status" value="1"/>
</dbReference>
<dbReference type="InterPro" id="IPR002016">
    <property type="entry name" value="Haem_peroxidase"/>
</dbReference>
<dbReference type="InterPro" id="IPR010255">
    <property type="entry name" value="Haem_peroxidase_sf"/>
</dbReference>
<dbReference type="InterPro" id="IPR000823">
    <property type="entry name" value="Peroxidase_pln"/>
</dbReference>
<dbReference type="InterPro" id="IPR019794">
    <property type="entry name" value="Peroxidases_AS"/>
</dbReference>
<dbReference type="InterPro" id="IPR019793">
    <property type="entry name" value="Peroxidases_heam-ligand_BS"/>
</dbReference>
<dbReference type="InterPro" id="IPR033905">
    <property type="entry name" value="Secretory_peroxidase"/>
</dbReference>
<dbReference type="PANTHER" id="PTHR31235">
    <property type="entry name" value="PEROXIDASE 25-RELATED"/>
    <property type="match status" value="1"/>
</dbReference>
<dbReference type="Pfam" id="PF00141">
    <property type="entry name" value="peroxidase"/>
    <property type="match status" value="1"/>
</dbReference>
<dbReference type="PRINTS" id="PR00458">
    <property type="entry name" value="PEROXIDASE"/>
</dbReference>
<dbReference type="PRINTS" id="PR00461">
    <property type="entry name" value="PLPEROXIDASE"/>
</dbReference>
<dbReference type="SUPFAM" id="SSF48113">
    <property type="entry name" value="Heme-dependent peroxidases"/>
    <property type="match status" value="1"/>
</dbReference>
<dbReference type="PROSITE" id="PS00435">
    <property type="entry name" value="PEROXIDASE_1"/>
    <property type="match status" value="1"/>
</dbReference>
<dbReference type="PROSITE" id="PS00436">
    <property type="entry name" value="PEROXIDASE_2"/>
    <property type="match status" value="1"/>
</dbReference>
<dbReference type="PROSITE" id="PS50873">
    <property type="entry name" value="PEROXIDASE_4"/>
    <property type="match status" value="1"/>
</dbReference>
<comment type="function">
    <text>Removal of H(2)O(2), oxidation of toxic reductants, biosynthesis and degradation of lignin, suberization, auxin catabolism, response to environmental stresses such as wounding, pathogen attack and oxidative stress. These functions might be dependent on each isozyme/isoform in each plant tissue.</text>
</comment>
<comment type="catalytic activity">
    <reaction>
        <text>2 a phenolic donor + H2O2 = 2 a phenolic radical donor + 2 H2O</text>
        <dbReference type="Rhea" id="RHEA:56136"/>
        <dbReference type="ChEBI" id="CHEBI:15377"/>
        <dbReference type="ChEBI" id="CHEBI:16240"/>
        <dbReference type="ChEBI" id="CHEBI:139520"/>
        <dbReference type="ChEBI" id="CHEBI:139521"/>
        <dbReference type="EC" id="1.11.1.7"/>
    </reaction>
</comment>
<comment type="cofactor">
    <cofactor evidence="2">
        <name>heme b</name>
        <dbReference type="ChEBI" id="CHEBI:60344"/>
    </cofactor>
    <text evidence="2">Binds 1 heme b (iron(II)-protoporphyrin IX) group per subunit.</text>
</comment>
<comment type="cofactor">
    <cofactor evidence="2">
        <name>Ca(2+)</name>
        <dbReference type="ChEBI" id="CHEBI:29108"/>
    </cofactor>
    <text evidence="2">Binds 2 calcium ions per subunit.</text>
</comment>
<comment type="subcellular location">
    <subcellularLocation>
        <location evidence="2">Secreted</location>
    </subcellularLocation>
</comment>
<comment type="miscellaneous">
    <text>There are 73 peroxidase genes in A.thaliana.</text>
</comment>
<comment type="similarity">
    <text evidence="2">Belongs to the peroxidase family. Classical plant (class III) peroxidase subfamily.</text>
</comment>
<proteinExistence type="evidence at transcript level"/>